<organismHost>
    <name type="scientific">Acheta domesticus</name>
    <name type="common">House cricket</name>
    <dbReference type="NCBI Taxonomy" id="6997"/>
</organismHost>
<organismHost>
    <name type="scientific">Chilo suppressalis</name>
    <name type="common">Asiatic rice borer moth</name>
    <dbReference type="NCBI Taxonomy" id="168631"/>
</organismHost>
<organismHost>
    <name type="scientific">Gryllus bimaculatus</name>
    <name type="common">Two-spotted cricket</name>
    <dbReference type="NCBI Taxonomy" id="6999"/>
</organismHost>
<organismHost>
    <name type="scientific">Gryllus campestris</name>
    <dbReference type="NCBI Taxonomy" id="58607"/>
</organismHost>
<organismHost>
    <name type="scientific">Spodoptera frugiperda</name>
    <name type="common">Fall armyworm</name>
    <dbReference type="NCBI Taxonomy" id="7108"/>
</organismHost>
<feature type="chain" id="PRO_0000377974" description="Uncharacterized protein 061R">
    <location>
        <begin position="1"/>
        <end position="155"/>
    </location>
</feature>
<feature type="transmembrane region" description="Helical" evidence="1">
    <location>
        <begin position="5"/>
        <end position="25"/>
    </location>
</feature>
<gene>
    <name type="ORF">IIV6-061R</name>
</gene>
<protein>
    <recommendedName>
        <fullName>Uncharacterized protein 061R</fullName>
    </recommendedName>
</protein>
<name>061R_IIV6</name>
<comment type="subcellular location">
    <subcellularLocation>
        <location evidence="2">Membrane</location>
        <topology evidence="2">Single-pass membrane protein</topology>
    </subcellularLocation>
</comment>
<accession>O55705</accession>
<organism>
    <name type="scientific">Invertebrate iridescent virus 6</name>
    <name type="common">IIV-6</name>
    <name type="synonym">Chilo iridescent virus</name>
    <dbReference type="NCBI Taxonomy" id="176652"/>
    <lineage>
        <taxon>Viruses</taxon>
        <taxon>Varidnaviria</taxon>
        <taxon>Bamfordvirae</taxon>
        <taxon>Nucleocytoviricota</taxon>
        <taxon>Megaviricetes</taxon>
        <taxon>Pimascovirales</taxon>
        <taxon>Iridoviridae</taxon>
        <taxon>Betairidovirinae</taxon>
        <taxon>Iridovirus</taxon>
    </lineage>
</organism>
<evidence type="ECO:0000255" key="1"/>
<evidence type="ECO:0000305" key="2"/>
<proteinExistence type="predicted"/>
<sequence length="155" mass="17918">MNDRGIIICVGIAFLIFIFLWAYFKNKKVKTGNYGNYSYYDKLTDRLDAKLGHDSSFMIQHYLDPENCPLYGDLPTLSQLVNLKQNNPSKYEELVNDGTVKRAVNIKALKTWLLLGSSNVDKFKHFMNQVNQLNIDKVDMLNLENALKYQLSKTQ</sequence>
<reference key="1">
    <citation type="journal article" date="2001" name="Virology">
        <title>Analysis of the first complete DNA sequence of an invertebrate iridovirus: coding strategy of the genome of Chilo iridescent virus.</title>
        <authorList>
            <person name="Jakob N.J."/>
            <person name="Mueller K."/>
            <person name="Bahr U."/>
            <person name="Darai G."/>
        </authorList>
    </citation>
    <scope>NUCLEOTIDE SEQUENCE [LARGE SCALE GENOMIC DNA]</scope>
</reference>
<reference key="2">
    <citation type="journal article" date="2007" name="Virol. J.">
        <title>Comparative genomic analysis of the family Iridoviridae: re-annotating and defining the core set of iridovirus genes.</title>
        <authorList>
            <person name="Eaton H.E."/>
            <person name="Metcalf J."/>
            <person name="Penny E."/>
            <person name="Tcherepanov V."/>
            <person name="Upton C."/>
            <person name="Brunetti C.R."/>
        </authorList>
    </citation>
    <scope>GENOME REANNOTATION</scope>
</reference>
<dbReference type="EMBL" id="AF303741">
    <property type="protein sequence ID" value="AAB94416.1"/>
    <property type="molecule type" value="Genomic_DNA"/>
</dbReference>
<dbReference type="PIR" id="T03042">
    <property type="entry name" value="T03042"/>
</dbReference>
<dbReference type="RefSeq" id="NP_149524.1">
    <property type="nucleotide sequence ID" value="NC_003038.1"/>
</dbReference>
<dbReference type="SMR" id="O55705"/>
<dbReference type="KEGG" id="vg:1733053"/>
<dbReference type="OrthoDB" id="37663at10239"/>
<dbReference type="Proteomes" id="UP000001359">
    <property type="component" value="Genome"/>
</dbReference>
<dbReference type="GO" id="GO:0016020">
    <property type="term" value="C:membrane"/>
    <property type="evidence" value="ECO:0007669"/>
    <property type="project" value="UniProtKB-SubCell"/>
</dbReference>
<keyword id="KW-0472">Membrane</keyword>
<keyword id="KW-1185">Reference proteome</keyword>
<keyword id="KW-0812">Transmembrane</keyword>
<keyword id="KW-1133">Transmembrane helix</keyword>